<accession>Q0TMQ6</accession>
<feature type="chain" id="PRO_1000055563" description="Large ribosomal subunit protein uL14">
    <location>
        <begin position="1"/>
        <end position="122"/>
    </location>
</feature>
<keyword id="KW-0687">Ribonucleoprotein</keyword>
<keyword id="KW-0689">Ribosomal protein</keyword>
<keyword id="KW-0694">RNA-binding</keyword>
<keyword id="KW-0699">rRNA-binding</keyword>
<proteinExistence type="inferred from homology"/>
<protein>
    <recommendedName>
        <fullName evidence="1">Large ribosomal subunit protein uL14</fullName>
    </recommendedName>
    <alternativeName>
        <fullName evidence="2">50S ribosomal protein L14</fullName>
    </alternativeName>
</protein>
<name>RL14_CLOP1</name>
<sequence length="122" mass="13232">MIQQQTLLKVADNSGAKEIMCIRVLGGSKRKFGNIGDVIVASVKSATPGGVVKKGEVVKAVIVRSVRGLRRADGSYIKFDENAAVIIKDDKQPRGTRIFGPVARELRDNEFNKILSLAPEVL</sequence>
<dbReference type="EMBL" id="CP000246">
    <property type="protein sequence ID" value="ABG83088.1"/>
    <property type="molecule type" value="Genomic_DNA"/>
</dbReference>
<dbReference type="RefSeq" id="WP_003454425.1">
    <property type="nucleotide sequence ID" value="NC_008261.1"/>
</dbReference>
<dbReference type="SMR" id="Q0TMQ6"/>
<dbReference type="STRING" id="195103.CPF_2704"/>
<dbReference type="PaxDb" id="195103-CPF_2704"/>
<dbReference type="GeneID" id="93001019"/>
<dbReference type="KEGG" id="cpf:CPF_2704"/>
<dbReference type="eggNOG" id="COG0093">
    <property type="taxonomic scope" value="Bacteria"/>
</dbReference>
<dbReference type="HOGENOM" id="CLU_095071_2_1_9"/>
<dbReference type="Proteomes" id="UP000001823">
    <property type="component" value="Chromosome"/>
</dbReference>
<dbReference type="GO" id="GO:0022625">
    <property type="term" value="C:cytosolic large ribosomal subunit"/>
    <property type="evidence" value="ECO:0007669"/>
    <property type="project" value="TreeGrafter"/>
</dbReference>
<dbReference type="GO" id="GO:0070180">
    <property type="term" value="F:large ribosomal subunit rRNA binding"/>
    <property type="evidence" value="ECO:0007669"/>
    <property type="project" value="TreeGrafter"/>
</dbReference>
<dbReference type="GO" id="GO:0003735">
    <property type="term" value="F:structural constituent of ribosome"/>
    <property type="evidence" value="ECO:0007669"/>
    <property type="project" value="InterPro"/>
</dbReference>
<dbReference type="GO" id="GO:0006412">
    <property type="term" value="P:translation"/>
    <property type="evidence" value="ECO:0007669"/>
    <property type="project" value="UniProtKB-UniRule"/>
</dbReference>
<dbReference type="CDD" id="cd00337">
    <property type="entry name" value="Ribosomal_uL14"/>
    <property type="match status" value="1"/>
</dbReference>
<dbReference type="FunFam" id="2.40.150.20:FF:000001">
    <property type="entry name" value="50S ribosomal protein L14"/>
    <property type="match status" value="1"/>
</dbReference>
<dbReference type="Gene3D" id="2.40.150.20">
    <property type="entry name" value="Ribosomal protein L14"/>
    <property type="match status" value="1"/>
</dbReference>
<dbReference type="HAMAP" id="MF_01367">
    <property type="entry name" value="Ribosomal_uL14"/>
    <property type="match status" value="1"/>
</dbReference>
<dbReference type="InterPro" id="IPR000218">
    <property type="entry name" value="Ribosomal_uL14"/>
</dbReference>
<dbReference type="InterPro" id="IPR005745">
    <property type="entry name" value="Ribosomal_uL14_bac-type"/>
</dbReference>
<dbReference type="InterPro" id="IPR019972">
    <property type="entry name" value="Ribosomal_uL14_CS"/>
</dbReference>
<dbReference type="InterPro" id="IPR036853">
    <property type="entry name" value="Ribosomal_uL14_sf"/>
</dbReference>
<dbReference type="NCBIfam" id="TIGR01067">
    <property type="entry name" value="rplN_bact"/>
    <property type="match status" value="1"/>
</dbReference>
<dbReference type="PANTHER" id="PTHR11761">
    <property type="entry name" value="50S/60S RIBOSOMAL PROTEIN L14/L23"/>
    <property type="match status" value="1"/>
</dbReference>
<dbReference type="PANTHER" id="PTHR11761:SF3">
    <property type="entry name" value="LARGE RIBOSOMAL SUBUNIT PROTEIN UL14M"/>
    <property type="match status" value="1"/>
</dbReference>
<dbReference type="Pfam" id="PF00238">
    <property type="entry name" value="Ribosomal_L14"/>
    <property type="match status" value="1"/>
</dbReference>
<dbReference type="SMART" id="SM01374">
    <property type="entry name" value="Ribosomal_L14"/>
    <property type="match status" value="1"/>
</dbReference>
<dbReference type="SUPFAM" id="SSF50193">
    <property type="entry name" value="Ribosomal protein L14"/>
    <property type="match status" value="1"/>
</dbReference>
<dbReference type="PROSITE" id="PS00049">
    <property type="entry name" value="RIBOSOMAL_L14"/>
    <property type="match status" value="1"/>
</dbReference>
<evidence type="ECO:0000255" key="1">
    <source>
        <dbReference type="HAMAP-Rule" id="MF_01367"/>
    </source>
</evidence>
<evidence type="ECO:0000305" key="2"/>
<reference key="1">
    <citation type="journal article" date="2006" name="Genome Res.">
        <title>Skewed genomic variability in strains of the toxigenic bacterial pathogen, Clostridium perfringens.</title>
        <authorList>
            <person name="Myers G.S.A."/>
            <person name="Rasko D.A."/>
            <person name="Cheung J.K."/>
            <person name="Ravel J."/>
            <person name="Seshadri R."/>
            <person name="DeBoy R.T."/>
            <person name="Ren Q."/>
            <person name="Varga J."/>
            <person name="Awad M.M."/>
            <person name="Brinkac L.M."/>
            <person name="Daugherty S.C."/>
            <person name="Haft D.H."/>
            <person name="Dodson R.J."/>
            <person name="Madupu R."/>
            <person name="Nelson W.C."/>
            <person name="Rosovitz M.J."/>
            <person name="Sullivan S.A."/>
            <person name="Khouri H."/>
            <person name="Dimitrov G.I."/>
            <person name="Watkins K.L."/>
            <person name="Mulligan S."/>
            <person name="Benton J."/>
            <person name="Radune D."/>
            <person name="Fisher D.J."/>
            <person name="Atkins H.S."/>
            <person name="Hiscox T."/>
            <person name="Jost B.H."/>
            <person name="Billington S.J."/>
            <person name="Songer J.G."/>
            <person name="McClane B.A."/>
            <person name="Titball R.W."/>
            <person name="Rood J.I."/>
            <person name="Melville S.B."/>
            <person name="Paulsen I.T."/>
        </authorList>
    </citation>
    <scope>NUCLEOTIDE SEQUENCE [LARGE SCALE GENOMIC DNA]</scope>
    <source>
        <strain>ATCC 13124 / DSM 756 / JCM 1290 / NCIMB 6125 / NCTC 8237 / S 107 / Type A</strain>
    </source>
</reference>
<comment type="function">
    <text evidence="1">Binds to 23S rRNA. Forms part of two intersubunit bridges in the 70S ribosome.</text>
</comment>
<comment type="subunit">
    <text evidence="1">Part of the 50S ribosomal subunit. Forms a cluster with proteins L3 and L19. In the 70S ribosome, L14 and L19 interact and together make contacts with the 16S rRNA in bridges B5 and B8.</text>
</comment>
<comment type="similarity">
    <text evidence="1">Belongs to the universal ribosomal protein uL14 family.</text>
</comment>
<gene>
    <name evidence="1" type="primary">rplN</name>
    <name type="ordered locus">CPF_2704</name>
</gene>
<organism>
    <name type="scientific">Clostridium perfringens (strain ATCC 13124 / DSM 756 / JCM 1290 / NCIMB 6125 / NCTC 8237 / Type A)</name>
    <dbReference type="NCBI Taxonomy" id="195103"/>
    <lineage>
        <taxon>Bacteria</taxon>
        <taxon>Bacillati</taxon>
        <taxon>Bacillota</taxon>
        <taxon>Clostridia</taxon>
        <taxon>Eubacteriales</taxon>
        <taxon>Clostridiaceae</taxon>
        <taxon>Clostridium</taxon>
    </lineage>
</organism>